<feature type="chain" id="PRO_0000313139" description="DNA ligase">
    <location>
        <begin position="1"/>
        <end position="892"/>
    </location>
</feature>
<feature type="domain" description="BRCT" evidence="1">
    <location>
        <begin position="810"/>
        <end position="892"/>
    </location>
</feature>
<feature type="region of interest" description="Disordered" evidence="2">
    <location>
        <begin position="1"/>
        <end position="23"/>
    </location>
</feature>
<feature type="active site" description="N6-AMP-lysine intermediate" evidence="1">
    <location>
        <position position="184"/>
    </location>
</feature>
<feature type="binding site" evidence="1">
    <location>
        <begin position="99"/>
        <end position="103"/>
    </location>
    <ligand>
        <name>NAD(+)</name>
        <dbReference type="ChEBI" id="CHEBI:57540"/>
    </ligand>
</feature>
<feature type="binding site" evidence="1">
    <location>
        <begin position="148"/>
        <end position="149"/>
    </location>
    <ligand>
        <name>NAD(+)</name>
        <dbReference type="ChEBI" id="CHEBI:57540"/>
    </ligand>
</feature>
<feature type="binding site" evidence="1">
    <location>
        <position position="182"/>
    </location>
    <ligand>
        <name>NAD(+)</name>
        <dbReference type="ChEBI" id="CHEBI:57540"/>
    </ligand>
</feature>
<feature type="binding site" evidence="1">
    <location>
        <position position="205"/>
    </location>
    <ligand>
        <name>NAD(+)</name>
        <dbReference type="ChEBI" id="CHEBI:57540"/>
    </ligand>
</feature>
<feature type="binding site" evidence="1">
    <location>
        <position position="244"/>
    </location>
    <ligand>
        <name>NAD(+)</name>
        <dbReference type="ChEBI" id="CHEBI:57540"/>
    </ligand>
</feature>
<feature type="binding site" evidence="1">
    <location>
        <position position="369"/>
    </location>
    <ligand>
        <name>NAD(+)</name>
        <dbReference type="ChEBI" id="CHEBI:57540"/>
    </ligand>
</feature>
<feature type="binding site" evidence="1">
    <location>
        <position position="393"/>
    </location>
    <ligand>
        <name>NAD(+)</name>
        <dbReference type="ChEBI" id="CHEBI:57540"/>
    </ligand>
</feature>
<feature type="binding site" evidence="1">
    <location>
        <position position="490"/>
    </location>
    <ligand>
        <name>Zn(2+)</name>
        <dbReference type="ChEBI" id="CHEBI:29105"/>
    </ligand>
</feature>
<feature type="binding site" evidence="1">
    <location>
        <position position="493"/>
    </location>
    <ligand>
        <name>Zn(2+)</name>
        <dbReference type="ChEBI" id="CHEBI:29105"/>
    </ligand>
</feature>
<feature type="binding site" evidence="1">
    <location>
        <position position="509"/>
    </location>
    <ligand>
        <name>Zn(2+)</name>
        <dbReference type="ChEBI" id="CHEBI:29105"/>
    </ligand>
</feature>
<feature type="binding site" evidence="1">
    <location>
        <position position="515"/>
    </location>
    <ligand>
        <name>Zn(2+)</name>
        <dbReference type="ChEBI" id="CHEBI:29105"/>
    </ligand>
</feature>
<protein>
    <recommendedName>
        <fullName evidence="1">DNA ligase</fullName>
        <ecNumber evidence="1">6.5.1.2</ecNumber>
    </recommendedName>
    <alternativeName>
        <fullName evidence="1">Polydeoxyribonucleotide synthase [NAD(+)]</fullName>
    </alternativeName>
</protein>
<accession>A1A200</accession>
<proteinExistence type="inferred from homology"/>
<name>DNLJ_BIFAA</name>
<dbReference type="EC" id="6.5.1.2" evidence="1"/>
<dbReference type="EMBL" id="AP009256">
    <property type="protein sequence ID" value="BAF39733.1"/>
    <property type="molecule type" value="Genomic_DNA"/>
</dbReference>
<dbReference type="SMR" id="A1A200"/>
<dbReference type="STRING" id="367928.BAD_0952"/>
<dbReference type="PaxDb" id="1680-BADO_1008"/>
<dbReference type="KEGG" id="bad:BAD_0952"/>
<dbReference type="HOGENOM" id="CLU_007764_1_1_11"/>
<dbReference type="Proteomes" id="UP000008702">
    <property type="component" value="Chromosome"/>
</dbReference>
<dbReference type="GO" id="GO:0005829">
    <property type="term" value="C:cytosol"/>
    <property type="evidence" value="ECO:0007669"/>
    <property type="project" value="TreeGrafter"/>
</dbReference>
<dbReference type="GO" id="GO:0003911">
    <property type="term" value="F:DNA ligase (NAD+) activity"/>
    <property type="evidence" value="ECO:0007669"/>
    <property type="project" value="UniProtKB-UniRule"/>
</dbReference>
<dbReference type="GO" id="GO:0046872">
    <property type="term" value="F:metal ion binding"/>
    <property type="evidence" value="ECO:0007669"/>
    <property type="project" value="UniProtKB-KW"/>
</dbReference>
<dbReference type="GO" id="GO:0006281">
    <property type="term" value="P:DNA repair"/>
    <property type="evidence" value="ECO:0007669"/>
    <property type="project" value="UniProtKB-KW"/>
</dbReference>
<dbReference type="GO" id="GO:0006260">
    <property type="term" value="P:DNA replication"/>
    <property type="evidence" value="ECO:0007669"/>
    <property type="project" value="UniProtKB-KW"/>
</dbReference>
<dbReference type="CDD" id="cd17748">
    <property type="entry name" value="BRCT_DNA_ligase_like"/>
    <property type="match status" value="1"/>
</dbReference>
<dbReference type="CDD" id="cd00114">
    <property type="entry name" value="LIGANc"/>
    <property type="match status" value="1"/>
</dbReference>
<dbReference type="FunFam" id="2.40.50.140:FF:000012">
    <property type="entry name" value="DNA ligase"/>
    <property type="match status" value="1"/>
</dbReference>
<dbReference type="FunFam" id="3.30.470.30:FF:000001">
    <property type="entry name" value="DNA ligase"/>
    <property type="match status" value="1"/>
</dbReference>
<dbReference type="FunFam" id="3.40.50.10190:FF:000054">
    <property type="entry name" value="DNA ligase"/>
    <property type="match status" value="1"/>
</dbReference>
<dbReference type="Gene3D" id="6.20.10.30">
    <property type="match status" value="1"/>
</dbReference>
<dbReference type="Gene3D" id="1.10.150.20">
    <property type="entry name" value="5' to 3' exonuclease, C-terminal subdomain"/>
    <property type="match status" value="2"/>
</dbReference>
<dbReference type="Gene3D" id="3.40.50.10190">
    <property type="entry name" value="BRCT domain"/>
    <property type="match status" value="1"/>
</dbReference>
<dbReference type="Gene3D" id="3.30.470.30">
    <property type="entry name" value="DNA ligase/mRNA capping enzyme"/>
    <property type="match status" value="1"/>
</dbReference>
<dbReference type="Gene3D" id="1.10.287.610">
    <property type="entry name" value="Helix hairpin bin"/>
    <property type="match status" value="1"/>
</dbReference>
<dbReference type="Gene3D" id="2.40.50.140">
    <property type="entry name" value="Nucleic acid-binding proteins"/>
    <property type="match status" value="1"/>
</dbReference>
<dbReference type="HAMAP" id="MF_01588">
    <property type="entry name" value="DNA_ligase_A"/>
    <property type="match status" value="1"/>
</dbReference>
<dbReference type="InterPro" id="IPR001357">
    <property type="entry name" value="BRCT_dom"/>
</dbReference>
<dbReference type="InterPro" id="IPR036420">
    <property type="entry name" value="BRCT_dom_sf"/>
</dbReference>
<dbReference type="InterPro" id="IPR041663">
    <property type="entry name" value="DisA/LigA_HHH"/>
</dbReference>
<dbReference type="InterPro" id="IPR001679">
    <property type="entry name" value="DNA_ligase"/>
</dbReference>
<dbReference type="InterPro" id="IPR018239">
    <property type="entry name" value="DNA_ligase_AS"/>
</dbReference>
<dbReference type="InterPro" id="IPR033136">
    <property type="entry name" value="DNA_ligase_CS"/>
</dbReference>
<dbReference type="InterPro" id="IPR013839">
    <property type="entry name" value="DNAligase_adenylation"/>
</dbReference>
<dbReference type="InterPro" id="IPR013840">
    <property type="entry name" value="DNAligase_N"/>
</dbReference>
<dbReference type="InterPro" id="IPR012340">
    <property type="entry name" value="NA-bd_OB-fold"/>
</dbReference>
<dbReference type="InterPro" id="IPR004150">
    <property type="entry name" value="NAD_DNA_ligase_OB"/>
</dbReference>
<dbReference type="InterPro" id="IPR010994">
    <property type="entry name" value="RuvA_2-like"/>
</dbReference>
<dbReference type="InterPro" id="IPR004149">
    <property type="entry name" value="Znf_DNAligase_C4"/>
</dbReference>
<dbReference type="NCBIfam" id="TIGR00575">
    <property type="entry name" value="dnlj"/>
    <property type="match status" value="1"/>
</dbReference>
<dbReference type="NCBIfam" id="NF005932">
    <property type="entry name" value="PRK07956.1"/>
    <property type="match status" value="1"/>
</dbReference>
<dbReference type="PANTHER" id="PTHR23389">
    <property type="entry name" value="CHROMOSOME TRANSMISSION FIDELITY FACTOR 18"/>
    <property type="match status" value="1"/>
</dbReference>
<dbReference type="PANTHER" id="PTHR23389:SF9">
    <property type="entry name" value="DNA LIGASE"/>
    <property type="match status" value="1"/>
</dbReference>
<dbReference type="Pfam" id="PF00533">
    <property type="entry name" value="BRCT"/>
    <property type="match status" value="1"/>
</dbReference>
<dbReference type="Pfam" id="PF01653">
    <property type="entry name" value="DNA_ligase_aden"/>
    <property type="match status" value="1"/>
</dbReference>
<dbReference type="Pfam" id="PF03120">
    <property type="entry name" value="DNA_ligase_OB"/>
    <property type="match status" value="1"/>
</dbReference>
<dbReference type="Pfam" id="PF03119">
    <property type="entry name" value="DNA_ligase_ZBD"/>
    <property type="match status" value="1"/>
</dbReference>
<dbReference type="Pfam" id="PF12826">
    <property type="entry name" value="HHH_2"/>
    <property type="match status" value="1"/>
</dbReference>
<dbReference type="SMART" id="SM00292">
    <property type="entry name" value="BRCT"/>
    <property type="match status" value="1"/>
</dbReference>
<dbReference type="SMART" id="SM00532">
    <property type="entry name" value="LIGANc"/>
    <property type="match status" value="1"/>
</dbReference>
<dbReference type="SUPFAM" id="SSF52113">
    <property type="entry name" value="BRCT domain"/>
    <property type="match status" value="1"/>
</dbReference>
<dbReference type="SUPFAM" id="SSF56091">
    <property type="entry name" value="DNA ligase/mRNA capping enzyme, catalytic domain"/>
    <property type="match status" value="1"/>
</dbReference>
<dbReference type="SUPFAM" id="SSF50249">
    <property type="entry name" value="Nucleic acid-binding proteins"/>
    <property type="match status" value="1"/>
</dbReference>
<dbReference type="SUPFAM" id="SSF47781">
    <property type="entry name" value="RuvA domain 2-like"/>
    <property type="match status" value="1"/>
</dbReference>
<dbReference type="PROSITE" id="PS50172">
    <property type="entry name" value="BRCT"/>
    <property type="match status" value="1"/>
</dbReference>
<dbReference type="PROSITE" id="PS01055">
    <property type="entry name" value="DNA_LIGASE_N1"/>
    <property type="match status" value="1"/>
</dbReference>
<dbReference type="PROSITE" id="PS01056">
    <property type="entry name" value="DNA_LIGASE_N2"/>
    <property type="match status" value="1"/>
</dbReference>
<comment type="function">
    <text evidence="1">DNA ligase that catalyzes the formation of phosphodiester linkages between 5'-phosphoryl and 3'-hydroxyl groups in double-stranded DNA using NAD as a coenzyme and as the energy source for the reaction. It is essential for DNA replication and repair of damaged DNA.</text>
</comment>
<comment type="catalytic activity">
    <reaction evidence="1">
        <text>NAD(+) + (deoxyribonucleotide)n-3'-hydroxyl + 5'-phospho-(deoxyribonucleotide)m = (deoxyribonucleotide)n+m + AMP + beta-nicotinamide D-nucleotide.</text>
        <dbReference type="EC" id="6.5.1.2"/>
    </reaction>
</comment>
<comment type="cofactor">
    <cofactor evidence="1">
        <name>Mg(2+)</name>
        <dbReference type="ChEBI" id="CHEBI:18420"/>
    </cofactor>
    <cofactor evidence="1">
        <name>Mn(2+)</name>
        <dbReference type="ChEBI" id="CHEBI:29035"/>
    </cofactor>
</comment>
<comment type="similarity">
    <text evidence="1">Belongs to the NAD-dependent DNA ligase family. LigA subfamily.</text>
</comment>
<keyword id="KW-0227">DNA damage</keyword>
<keyword id="KW-0234">DNA repair</keyword>
<keyword id="KW-0235">DNA replication</keyword>
<keyword id="KW-0436">Ligase</keyword>
<keyword id="KW-0460">Magnesium</keyword>
<keyword id="KW-0464">Manganese</keyword>
<keyword id="KW-0479">Metal-binding</keyword>
<keyword id="KW-0520">NAD</keyword>
<keyword id="KW-1185">Reference proteome</keyword>
<keyword id="KW-0862">Zinc</keyword>
<evidence type="ECO:0000255" key="1">
    <source>
        <dbReference type="HAMAP-Rule" id="MF_01588"/>
    </source>
</evidence>
<evidence type="ECO:0000256" key="2">
    <source>
        <dbReference type="SAM" id="MobiDB-lite"/>
    </source>
</evidence>
<reference key="1">
    <citation type="submission" date="2006-12" db="EMBL/GenBank/DDBJ databases">
        <title>Bifidobacterium adolescentis complete genome sequence.</title>
        <authorList>
            <person name="Suzuki T."/>
            <person name="Tsuda Y."/>
            <person name="Kanou N."/>
            <person name="Inoue T."/>
            <person name="Kumazaki K."/>
            <person name="Nagano S."/>
            <person name="Hirai S."/>
            <person name="Tanaka K."/>
            <person name="Watanabe K."/>
        </authorList>
    </citation>
    <scope>NUCLEOTIDE SEQUENCE [LARGE SCALE GENOMIC DNA]</scope>
    <source>
        <strain>ATCC 15703 / DSM 20083 / NCTC 11814 / E194a</strain>
    </source>
</reference>
<organism>
    <name type="scientific">Bifidobacterium adolescentis (strain ATCC 15703 / DSM 20083 / NCTC 11814 / E194a)</name>
    <dbReference type="NCBI Taxonomy" id="367928"/>
    <lineage>
        <taxon>Bacteria</taxon>
        <taxon>Bacillati</taxon>
        <taxon>Actinomycetota</taxon>
        <taxon>Actinomycetes</taxon>
        <taxon>Bifidobacteriales</taxon>
        <taxon>Bifidobacteriaceae</taxon>
        <taxon>Bifidobacterium</taxon>
    </lineage>
</organism>
<gene>
    <name evidence="1" type="primary">ligA</name>
    <name type="ordered locus">BAD_0952</name>
</gene>
<sequence>MTMTNRDDSEQLAWDFDAPESDGSSAAVVADEGLASLTPGSERWIAALQPTDADAMRLDKVDVASMSAEAAARLWARVAAWVESDQIAYYIDDAPVSSDAAYDARLRCLQSLEAQFPSLDSPQSPTHRVGGTFSNDFASVRHPSRMMSLDDVFSIEELREWYDGVLRGLDWPESKPLPMTCEVKIDGLALNLIYRNGVLEQGLTRGDGVTGEDITLNVRTISTIPQNLAGPEEDIPEFVEIRGEVFMRWDDFNKLNAENEDAGRAPFANPRNAAAGSLRQKDPRITATRRLSFYAHGIGSLRWGAGHAGNGHDVVNDQSEAYELYKKWGVPVSPHNREVTSFKEILDMIDYYGEHRGDIEHALDGIVVKVDDLGLQRSLGATSRAPRWAIAYKYPPEEVNTELLDITVQVGRTGRVTPVAVLKPVYVAGSTVSRTTLHNPFEVERKGVLIGDTVVVRKAGDVIPELVGPVLERRKGREGELRRFVMPTRCPSCGAELAPAKEGDKDIRCPNVESCPAQLTERIINLASRKAFDIEHLGDQSAIALTNPEEDRPDSIDTYAPNITEIVVKPGEEPEPYEPVAGLELPPMQTPVLSSEAGLFSLTSADLKDVRVWREAPIIEIHETVGSNGKIKKVRKRVGGSGLWHQVPAFWTAPTAARKRKEADIDETAEYPQYVVPDDAVVIREEIKVSRGGTSSVQPVYIRPAENTRKMLDEMDKARHADLWRVLVALSIRRLGPPTARTIASAFGTLDAIEHASVDELSQIDGIGSEIAESVVTWFTAAREPGNWRGAVLDAWKAAGVGVGQAQASGLPQTLAGKTVVVTGSLEGFSRDSAKEAIVLRGGKAAGSVSKKTDWVVVGENAGSKAAKAEELGIPMLNEDQFKQLLDTGTVE</sequence>